<accession>A8ALQ0</accession>
<sequence length="125" mass="13903">MINSPRVCIQVQSVYIEAQSSPDDERYVFAYTVTIRNLGRAPVQLLGRYWLITNGHGRETEVQGEGVVGVQPHIAPGEEYQYTSGAVIETPLGTMQGHYEMIDEKGVAFTIDIPVFRLAVPTLIH</sequence>
<evidence type="ECO:0000255" key="1">
    <source>
        <dbReference type="HAMAP-Rule" id="MF_00791"/>
    </source>
</evidence>
<feature type="chain" id="PRO_1000083614" description="Protein ApaG">
    <location>
        <begin position="1"/>
        <end position="125"/>
    </location>
</feature>
<feature type="domain" description="ApaG" evidence="1">
    <location>
        <begin position="1"/>
        <end position="125"/>
    </location>
</feature>
<keyword id="KW-1185">Reference proteome</keyword>
<reference key="1">
    <citation type="submission" date="2007-08" db="EMBL/GenBank/DDBJ databases">
        <authorList>
            <consortium name="The Citrobacter koseri Genome Sequencing Project"/>
            <person name="McClelland M."/>
            <person name="Sanderson E.K."/>
            <person name="Porwollik S."/>
            <person name="Spieth J."/>
            <person name="Clifton W.S."/>
            <person name="Latreille P."/>
            <person name="Courtney L."/>
            <person name="Wang C."/>
            <person name="Pepin K."/>
            <person name="Bhonagiri V."/>
            <person name="Nash W."/>
            <person name="Johnson M."/>
            <person name="Thiruvilangam P."/>
            <person name="Wilson R."/>
        </authorList>
    </citation>
    <scope>NUCLEOTIDE SEQUENCE [LARGE SCALE GENOMIC DNA]</scope>
    <source>
        <strain>ATCC BAA-895 / CDC 4225-83 / SGSC4696</strain>
    </source>
</reference>
<dbReference type="EMBL" id="CP000822">
    <property type="protein sequence ID" value="ABV14413.1"/>
    <property type="molecule type" value="Genomic_DNA"/>
</dbReference>
<dbReference type="RefSeq" id="WP_012134116.1">
    <property type="nucleotide sequence ID" value="NC_009792.1"/>
</dbReference>
<dbReference type="SMR" id="A8ALQ0"/>
<dbReference type="STRING" id="290338.CKO_03330"/>
<dbReference type="GeneID" id="45137095"/>
<dbReference type="KEGG" id="cko:CKO_03330"/>
<dbReference type="HOGENOM" id="CLU_128074_0_0_6"/>
<dbReference type="OrthoDB" id="9795226at2"/>
<dbReference type="Proteomes" id="UP000008148">
    <property type="component" value="Chromosome"/>
</dbReference>
<dbReference type="GO" id="GO:0070987">
    <property type="term" value="P:error-free translesion synthesis"/>
    <property type="evidence" value="ECO:0007669"/>
    <property type="project" value="TreeGrafter"/>
</dbReference>
<dbReference type="Gene3D" id="2.60.40.1470">
    <property type="entry name" value="ApaG domain"/>
    <property type="match status" value="1"/>
</dbReference>
<dbReference type="HAMAP" id="MF_00791">
    <property type="entry name" value="ApaG"/>
    <property type="match status" value="1"/>
</dbReference>
<dbReference type="InterPro" id="IPR007474">
    <property type="entry name" value="ApaG_domain"/>
</dbReference>
<dbReference type="InterPro" id="IPR036767">
    <property type="entry name" value="ApaG_sf"/>
</dbReference>
<dbReference type="InterPro" id="IPR023065">
    <property type="entry name" value="Uncharacterised_ApaG"/>
</dbReference>
<dbReference type="NCBIfam" id="NF003967">
    <property type="entry name" value="PRK05461.1"/>
    <property type="match status" value="1"/>
</dbReference>
<dbReference type="PANTHER" id="PTHR14289">
    <property type="entry name" value="F-BOX ONLY PROTEIN 3"/>
    <property type="match status" value="1"/>
</dbReference>
<dbReference type="PANTHER" id="PTHR14289:SF16">
    <property type="entry name" value="POLYMERASE DELTA-INTERACTING PROTEIN 2"/>
    <property type="match status" value="1"/>
</dbReference>
<dbReference type="Pfam" id="PF04379">
    <property type="entry name" value="DUF525"/>
    <property type="match status" value="1"/>
</dbReference>
<dbReference type="SUPFAM" id="SSF110069">
    <property type="entry name" value="ApaG-like"/>
    <property type="match status" value="1"/>
</dbReference>
<dbReference type="PROSITE" id="PS51087">
    <property type="entry name" value="APAG"/>
    <property type="match status" value="1"/>
</dbReference>
<organism>
    <name type="scientific">Citrobacter koseri (strain ATCC BAA-895 / CDC 4225-83 / SGSC4696)</name>
    <dbReference type="NCBI Taxonomy" id="290338"/>
    <lineage>
        <taxon>Bacteria</taxon>
        <taxon>Pseudomonadati</taxon>
        <taxon>Pseudomonadota</taxon>
        <taxon>Gammaproteobacteria</taxon>
        <taxon>Enterobacterales</taxon>
        <taxon>Enterobacteriaceae</taxon>
        <taxon>Citrobacter</taxon>
    </lineage>
</organism>
<gene>
    <name evidence="1" type="primary">apaG</name>
    <name type="ordered locus">CKO_03330</name>
</gene>
<protein>
    <recommendedName>
        <fullName evidence="1">Protein ApaG</fullName>
    </recommendedName>
</protein>
<proteinExistence type="inferred from homology"/>
<name>APAG_CITK8</name>